<sequence length="515" mass="56104">MEIRADEISRIIREQIKDYGKKVTVAETGTVLSVGDGIARIYGLEGALAGELVEFANGVQGLVLNLEEDNVGVAIMGDFQAIREGDTVKRTQQIASVPVGKELLGRVVDPLGKPLDGKGPIAATETRRLEVKAPGIVSRKSVHEPLQTGIKALDALVPVGRGQRELIIGDRQTGKTAVAIDTIINQKGLNVYCIYVAIGQKQSTVAQVVEKLNRYGAMEYTTVVASNASDPAPMQFFAPYAGVAMGEYFRDNKMHALIVYDDLSKQAVAYRQLSLLLRRPPGREAYPGDVFYVHSRLLERAAKLSDEEGAGSLTALPIIETQAGDVSAYIPTNVISITDGQIFLETDLFFAGVRPAINVGLSVSRVGSAAQIKAMKQVAGTMKLELAQYRELAAFAQFGSDLDKATQETLARGARMVELLKQGQYEPMPVEKQVMQIYAATNRDDPKKRGWIRDIPTADVVRWMREFLEFADGKHPNVAKDLASKRELTADIKTALSKAITEFNEVFQPTPGAKV</sequence>
<comment type="function">
    <text>Produces ATP from ADP in the presence of a proton gradient across the membrane. The alpha chain is a regulatory subunit.</text>
</comment>
<comment type="catalytic activity">
    <reaction evidence="1">
        <text>ATP + H2O + 4 H(+)(in) = ADP + phosphate + 5 H(+)(out)</text>
        <dbReference type="Rhea" id="RHEA:57720"/>
        <dbReference type="ChEBI" id="CHEBI:15377"/>
        <dbReference type="ChEBI" id="CHEBI:15378"/>
        <dbReference type="ChEBI" id="CHEBI:30616"/>
        <dbReference type="ChEBI" id="CHEBI:43474"/>
        <dbReference type="ChEBI" id="CHEBI:456216"/>
        <dbReference type="EC" id="7.1.2.2"/>
    </reaction>
</comment>
<comment type="subunit">
    <text evidence="1">F-type ATPases have 2 components, CF(1) - the catalytic core - and CF(0) - the membrane proton channel. CF(1) has five subunits: alpha(3), beta(3), gamma(1), delta(1), epsilon(1). CF(0) has three main subunits: a(1), b(2) and c(9-12). The alpha and beta chains form an alternating ring which encloses part of the gamma chain. CF(1) is attached to CF(0) by a central stalk formed by the gamma and epsilon chains, while a peripheral stalk is formed by the delta and b chains.</text>
</comment>
<comment type="subcellular location">
    <subcellularLocation>
        <location evidence="1">Cell inner membrane</location>
        <topology evidence="1">Peripheral membrane protein</topology>
    </subcellularLocation>
</comment>
<comment type="similarity">
    <text evidence="1">Belongs to the ATPase alpha/beta chains family.</text>
</comment>
<protein>
    <recommendedName>
        <fullName evidence="1">ATP synthase subunit alpha</fullName>
        <ecNumber evidence="1">7.1.2.2</ecNumber>
    </recommendedName>
    <alternativeName>
        <fullName evidence="1">ATP synthase F1 sector subunit alpha</fullName>
    </alternativeName>
    <alternativeName>
        <fullName evidence="1">F-ATPase subunit alpha</fullName>
    </alternativeName>
</protein>
<feature type="chain" id="PRO_0000144341" description="ATP synthase subunit alpha">
    <location>
        <begin position="1"/>
        <end position="515"/>
    </location>
</feature>
<feature type="binding site" evidence="1">
    <location>
        <begin position="169"/>
        <end position="176"/>
    </location>
    <ligand>
        <name>ATP</name>
        <dbReference type="ChEBI" id="CHEBI:30616"/>
    </ligand>
</feature>
<feature type="site" description="Required for activity" evidence="1">
    <location>
        <position position="362"/>
    </location>
</feature>
<organism>
    <name type="scientific">Myxococcus xanthus</name>
    <dbReference type="NCBI Taxonomy" id="34"/>
    <lineage>
        <taxon>Bacteria</taxon>
        <taxon>Pseudomonadati</taxon>
        <taxon>Myxococcota</taxon>
        <taxon>Myxococcia</taxon>
        <taxon>Myxococcales</taxon>
        <taxon>Cystobacterineae</taxon>
        <taxon>Myxococcaceae</taxon>
        <taxon>Myxococcus</taxon>
    </lineage>
</organism>
<keyword id="KW-0066">ATP synthesis</keyword>
<keyword id="KW-0067">ATP-binding</keyword>
<keyword id="KW-0997">Cell inner membrane</keyword>
<keyword id="KW-1003">Cell membrane</keyword>
<keyword id="KW-0139">CF(1)</keyword>
<keyword id="KW-0903">Direct protein sequencing</keyword>
<keyword id="KW-0375">Hydrogen ion transport</keyword>
<keyword id="KW-0406">Ion transport</keyword>
<keyword id="KW-0472">Membrane</keyword>
<keyword id="KW-0547">Nucleotide-binding</keyword>
<keyword id="KW-1278">Translocase</keyword>
<keyword id="KW-0813">Transport</keyword>
<evidence type="ECO:0000255" key="1">
    <source>
        <dbReference type="HAMAP-Rule" id="MF_01346"/>
    </source>
</evidence>
<accession>Q07405</accession>
<proteinExistence type="evidence at protein level"/>
<reference key="1">
    <citation type="journal article" date="1994" name="Gene">
        <title>Identification of the Myxococcus xanthus 59-kDa membrane-associated GTP-binding protein as a proton-translocating ATPase.</title>
        <authorList>
            <person name="Munoz-Dorado J."/>
            <person name="Inouye S."/>
            <person name="Inouye M."/>
        </authorList>
    </citation>
    <scope>NUCLEOTIDE SEQUENCE [GENOMIC DNA]</scope>
    <scope>PROTEIN SEQUENCE OF 129-137</scope>
</reference>
<dbReference type="EC" id="7.1.2.2" evidence="1"/>
<dbReference type="EMBL" id="D16176">
    <property type="protein sequence ID" value="BAA03725.1"/>
    <property type="molecule type" value="Genomic_DNA"/>
</dbReference>
<dbReference type="RefSeq" id="WP_026114085.1">
    <property type="nucleotide sequence ID" value="NZ_JABFNQ010000012.1"/>
</dbReference>
<dbReference type="SMR" id="Q07405"/>
<dbReference type="GeneID" id="41364204"/>
<dbReference type="GO" id="GO:0005886">
    <property type="term" value="C:plasma membrane"/>
    <property type="evidence" value="ECO:0007669"/>
    <property type="project" value="UniProtKB-SubCell"/>
</dbReference>
<dbReference type="GO" id="GO:0045259">
    <property type="term" value="C:proton-transporting ATP synthase complex"/>
    <property type="evidence" value="ECO:0007669"/>
    <property type="project" value="UniProtKB-KW"/>
</dbReference>
<dbReference type="GO" id="GO:0043531">
    <property type="term" value="F:ADP binding"/>
    <property type="evidence" value="ECO:0007669"/>
    <property type="project" value="TreeGrafter"/>
</dbReference>
<dbReference type="GO" id="GO:0005524">
    <property type="term" value="F:ATP binding"/>
    <property type="evidence" value="ECO:0007669"/>
    <property type="project" value="UniProtKB-UniRule"/>
</dbReference>
<dbReference type="GO" id="GO:0046933">
    <property type="term" value="F:proton-transporting ATP synthase activity, rotational mechanism"/>
    <property type="evidence" value="ECO:0007669"/>
    <property type="project" value="UniProtKB-UniRule"/>
</dbReference>
<dbReference type="CDD" id="cd18113">
    <property type="entry name" value="ATP-synt_F1_alpha_C"/>
    <property type="match status" value="1"/>
</dbReference>
<dbReference type="CDD" id="cd18116">
    <property type="entry name" value="ATP-synt_F1_alpha_N"/>
    <property type="match status" value="1"/>
</dbReference>
<dbReference type="CDD" id="cd01132">
    <property type="entry name" value="F1-ATPase_alpha_CD"/>
    <property type="match status" value="1"/>
</dbReference>
<dbReference type="FunFam" id="1.20.150.20:FF:000001">
    <property type="entry name" value="ATP synthase subunit alpha"/>
    <property type="match status" value="1"/>
</dbReference>
<dbReference type="FunFam" id="2.40.30.20:FF:000001">
    <property type="entry name" value="ATP synthase subunit alpha"/>
    <property type="match status" value="1"/>
</dbReference>
<dbReference type="FunFam" id="3.40.50.300:FF:000002">
    <property type="entry name" value="ATP synthase subunit alpha"/>
    <property type="match status" value="1"/>
</dbReference>
<dbReference type="Gene3D" id="2.40.30.20">
    <property type="match status" value="1"/>
</dbReference>
<dbReference type="Gene3D" id="1.20.150.20">
    <property type="entry name" value="ATP synthase alpha/beta chain, C-terminal domain"/>
    <property type="match status" value="1"/>
</dbReference>
<dbReference type="Gene3D" id="3.40.50.300">
    <property type="entry name" value="P-loop containing nucleotide triphosphate hydrolases"/>
    <property type="match status" value="1"/>
</dbReference>
<dbReference type="HAMAP" id="MF_01346">
    <property type="entry name" value="ATP_synth_alpha_bact"/>
    <property type="match status" value="1"/>
</dbReference>
<dbReference type="InterPro" id="IPR023366">
    <property type="entry name" value="ATP_synth_asu-like_sf"/>
</dbReference>
<dbReference type="InterPro" id="IPR000793">
    <property type="entry name" value="ATP_synth_asu_C"/>
</dbReference>
<dbReference type="InterPro" id="IPR038376">
    <property type="entry name" value="ATP_synth_asu_C_sf"/>
</dbReference>
<dbReference type="InterPro" id="IPR033732">
    <property type="entry name" value="ATP_synth_F1_a_nt-bd_dom"/>
</dbReference>
<dbReference type="InterPro" id="IPR005294">
    <property type="entry name" value="ATP_synth_F1_asu"/>
</dbReference>
<dbReference type="InterPro" id="IPR020003">
    <property type="entry name" value="ATPase_a/bsu_AS"/>
</dbReference>
<dbReference type="InterPro" id="IPR004100">
    <property type="entry name" value="ATPase_F1/V1/A1_a/bsu_N"/>
</dbReference>
<dbReference type="InterPro" id="IPR036121">
    <property type="entry name" value="ATPase_F1/V1/A1_a/bsu_N_sf"/>
</dbReference>
<dbReference type="InterPro" id="IPR000194">
    <property type="entry name" value="ATPase_F1/V1/A1_a/bsu_nucl-bd"/>
</dbReference>
<dbReference type="InterPro" id="IPR027417">
    <property type="entry name" value="P-loop_NTPase"/>
</dbReference>
<dbReference type="NCBIfam" id="TIGR00962">
    <property type="entry name" value="atpA"/>
    <property type="match status" value="1"/>
</dbReference>
<dbReference type="NCBIfam" id="NF009884">
    <property type="entry name" value="PRK13343.1"/>
    <property type="match status" value="1"/>
</dbReference>
<dbReference type="PANTHER" id="PTHR48082">
    <property type="entry name" value="ATP SYNTHASE SUBUNIT ALPHA, MITOCHONDRIAL"/>
    <property type="match status" value="1"/>
</dbReference>
<dbReference type="PANTHER" id="PTHR48082:SF2">
    <property type="entry name" value="ATP SYNTHASE SUBUNIT ALPHA, MITOCHONDRIAL"/>
    <property type="match status" value="1"/>
</dbReference>
<dbReference type="Pfam" id="PF00006">
    <property type="entry name" value="ATP-synt_ab"/>
    <property type="match status" value="1"/>
</dbReference>
<dbReference type="Pfam" id="PF00306">
    <property type="entry name" value="ATP-synt_ab_C"/>
    <property type="match status" value="1"/>
</dbReference>
<dbReference type="Pfam" id="PF02874">
    <property type="entry name" value="ATP-synt_ab_N"/>
    <property type="match status" value="1"/>
</dbReference>
<dbReference type="PIRSF" id="PIRSF039088">
    <property type="entry name" value="F_ATPase_subunit_alpha"/>
    <property type="match status" value="1"/>
</dbReference>
<dbReference type="SUPFAM" id="SSF47917">
    <property type="entry name" value="C-terminal domain of alpha and beta subunits of F1 ATP synthase"/>
    <property type="match status" value="1"/>
</dbReference>
<dbReference type="SUPFAM" id="SSF50615">
    <property type="entry name" value="N-terminal domain of alpha and beta subunits of F1 ATP synthase"/>
    <property type="match status" value="1"/>
</dbReference>
<dbReference type="SUPFAM" id="SSF52540">
    <property type="entry name" value="P-loop containing nucleoside triphosphate hydrolases"/>
    <property type="match status" value="1"/>
</dbReference>
<dbReference type="PROSITE" id="PS00152">
    <property type="entry name" value="ATPASE_ALPHA_BETA"/>
    <property type="match status" value="1"/>
</dbReference>
<name>ATPA_MYXXA</name>
<gene>
    <name evidence="1" type="primary">atpA</name>
    <name type="synonym">atp</name>
</gene>